<evidence type="ECO:0000250" key="1">
    <source>
        <dbReference type="UniProtKB" id="O43677"/>
    </source>
</evidence>
<evidence type="ECO:0000255" key="2"/>
<evidence type="ECO:0000269" key="3">
    <source>
    </source>
</evidence>
<evidence type="ECO:0000269" key="4">
    <source>
    </source>
</evidence>
<evidence type="ECO:0000269" key="5">
    <source>
    </source>
</evidence>
<evidence type="ECO:0000305" key="6"/>
<evidence type="ECO:0000305" key="7">
    <source>
    </source>
</evidence>
<evidence type="ECO:0000305" key="8">
    <source>
    </source>
</evidence>
<evidence type="ECO:0007829" key="9">
    <source>
        <dbReference type="PDB" id="7QSM"/>
    </source>
</evidence>
<evidence type="ECO:0007829" key="10">
    <source>
        <dbReference type="PDB" id="8Q0A"/>
    </source>
</evidence>
<evidence type="ECO:0007829" key="11">
    <source>
        <dbReference type="PDB" id="8Q47"/>
    </source>
</evidence>
<dbReference type="EMBL" id="X63214">
    <property type="protein sequence ID" value="CAA44899.1"/>
    <property type="molecule type" value="mRNA"/>
</dbReference>
<dbReference type="EMBL" id="BC102392">
    <property type="protein sequence ID" value="AAI02393.1"/>
    <property type="molecule type" value="mRNA"/>
</dbReference>
<dbReference type="PIR" id="S28250">
    <property type="entry name" value="S28250"/>
</dbReference>
<dbReference type="RefSeq" id="NP_776989.1">
    <property type="nucleotide sequence ID" value="NM_174564.2"/>
</dbReference>
<dbReference type="RefSeq" id="XP_005217593.1">
    <property type="nucleotide sequence ID" value="XM_005217536.2"/>
</dbReference>
<dbReference type="PDB" id="5LC5">
    <property type="method" value="EM"/>
    <property type="resolution" value="4.35 A"/>
    <property type="chains" value="c=1-76"/>
</dbReference>
<dbReference type="PDB" id="5LDW">
    <property type="method" value="EM"/>
    <property type="resolution" value="4.27 A"/>
    <property type="chains" value="c=28-76"/>
</dbReference>
<dbReference type="PDB" id="5LDX">
    <property type="method" value="EM"/>
    <property type="resolution" value="5.60 A"/>
    <property type="chains" value="c=28-76"/>
</dbReference>
<dbReference type="PDB" id="5LNK">
    <property type="method" value="EM"/>
    <property type="resolution" value="3.90 A"/>
    <property type="chains" value="x=28-76"/>
</dbReference>
<dbReference type="PDB" id="5O31">
    <property type="method" value="EM"/>
    <property type="resolution" value="4.13 A"/>
    <property type="chains" value="c=28-76"/>
</dbReference>
<dbReference type="PDB" id="7DGQ">
    <property type="method" value="EM"/>
    <property type="resolution" value="5.00 A"/>
    <property type="chains" value="i=28-76"/>
</dbReference>
<dbReference type="PDB" id="7DGR">
    <property type="method" value="EM"/>
    <property type="resolution" value="4.60 A"/>
    <property type="chains" value="i=28-76"/>
</dbReference>
<dbReference type="PDB" id="7DGS">
    <property type="method" value="EM"/>
    <property type="resolution" value="7.80 A"/>
    <property type="chains" value="i=28-76"/>
</dbReference>
<dbReference type="PDB" id="7DGZ">
    <property type="method" value="EM"/>
    <property type="resolution" value="3.80 A"/>
    <property type="chains" value="i=28-76"/>
</dbReference>
<dbReference type="PDB" id="7DH0">
    <property type="method" value="EM"/>
    <property type="resolution" value="4.20 A"/>
    <property type="chains" value="i=28-76"/>
</dbReference>
<dbReference type="PDB" id="7DKF">
    <property type="method" value="EM"/>
    <property type="resolution" value="8.30 A"/>
    <property type="chains" value="i2=28-76"/>
</dbReference>
<dbReference type="PDB" id="7QSD">
    <property type="method" value="EM"/>
    <property type="resolution" value="3.10 A"/>
    <property type="chains" value="c=1-76"/>
</dbReference>
<dbReference type="PDB" id="7QSK">
    <property type="method" value="EM"/>
    <property type="resolution" value="2.84 A"/>
    <property type="chains" value="c=1-76"/>
</dbReference>
<dbReference type="PDB" id="7QSL">
    <property type="method" value="EM"/>
    <property type="resolution" value="2.76 A"/>
    <property type="chains" value="c=1-76"/>
</dbReference>
<dbReference type="PDB" id="7QSM">
    <property type="method" value="EM"/>
    <property type="resolution" value="2.30 A"/>
    <property type="chains" value="c=1-76"/>
</dbReference>
<dbReference type="PDB" id="7QSN">
    <property type="method" value="EM"/>
    <property type="resolution" value="2.81 A"/>
    <property type="chains" value="c=1-76"/>
</dbReference>
<dbReference type="PDB" id="7QSO">
    <property type="method" value="EM"/>
    <property type="resolution" value="3.02 A"/>
    <property type="chains" value="c=1-76"/>
</dbReference>
<dbReference type="PDB" id="7R41">
    <property type="method" value="EM"/>
    <property type="resolution" value="2.30 A"/>
    <property type="chains" value="c=1-76"/>
</dbReference>
<dbReference type="PDB" id="7R42">
    <property type="method" value="EM"/>
    <property type="resolution" value="2.30 A"/>
    <property type="chains" value="c=1-76"/>
</dbReference>
<dbReference type="PDB" id="7R43">
    <property type="method" value="EM"/>
    <property type="resolution" value="2.40 A"/>
    <property type="chains" value="c=1-76"/>
</dbReference>
<dbReference type="PDB" id="7R44">
    <property type="method" value="EM"/>
    <property type="resolution" value="2.40 A"/>
    <property type="chains" value="c=1-76"/>
</dbReference>
<dbReference type="PDB" id="7R45">
    <property type="method" value="EM"/>
    <property type="resolution" value="2.40 A"/>
    <property type="chains" value="c=1-76"/>
</dbReference>
<dbReference type="PDB" id="7R46">
    <property type="method" value="EM"/>
    <property type="resolution" value="2.40 A"/>
    <property type="chains" value="c=1-76"/>
</dbReference>
<dbReference type="PDB" id="7R47">
    <property type="method" value="EM"/>
    <property type="resolution" value="2.30 A"/>
    <property type="chains" value="c=1-76"/>
</dbReference>
<dbReference type="PDB" id="7R48">
    <property type="method" value="EM"/>
    <property type="resolution" value="2.30 A"/>
    <property type="chains" value="c=1-76"/>
</dbReference>
<dbReference type="PDB" id="7R4C">
    <property type="method" value="EM"/>
    <property type="resolution" value="2.30 A"/>
    <property type="chains" value="c=1-76"/>
</dbReference>
<dbReference type="PDB" id="7R4D">
    <property type="method" value="EM"/>
    <property type="resolution" value="2.30 A"/>
    <property type="chains" value="c=1-76"/>
</dbReference>
<dbReference type="PDB" id="7R4F">
    <property type="method" value="EM"/>
    <property type="resolution" value="2.40 A"/>
    <property type="chains" value="c=1-76"/>
</dbReference>
<dbReference type="PDB" id="7R4G">
    <property type="method" value="EM"/>
    <property type="resolution" value="2.50 A"/>
    <property type="chains" value="c=1-76"/>
</dbReference>
<dbReference type="PDB" id="8Q0A">
    <property type="method" value="EM"/>
    <property type="resolution" value="3.10 A"/>
    <property type="chains" value="c=1-76"/>
</dbReference>
<dbReference type="PDB" id="8Q0F">
    <property type="method" value="EM"/>
    <property type="resolution" value="3.10 A"/>
    <property type="chains" value="c=1-76"/>
</dbReference>
<dbReference type="PDB" id="8Q0J">
    <property type="method" value="EM"/>
    <property type="resolution" value="3.80 A"/>
    <property type="chains" value="c=1-76"/>
</dbReference>
<dbReference type="PDB" id="8Q0M">
    <property type="method" value="EM"/>
    <property type="resolution" value="3.10 A"/>
    <property type="chains" value="c=1-76"/>
</dbReference>
<dbReference type="PDB" id="8Q0O">
    <property type="method" value="EM"/>
    <property type="resolution" value="3.10 A"/>
    <property type="chains" value="c=1-76"/>
</dbReference>
<dbReference type="PDB" id="8Q0Q">
    <property type="method" value="EM"/>
    <property type="resolution" value="3.60 A"/>
    <property type="chains" value="c=1-76"/>
</dbReference>
<dbReference type="PDB" id="8Q1P">
    <property type="method" value="EM"/>
    <property type="resolution" value="2.90 A"/>
    <property type="chains" value="c=1-76"/>
</dbReference>
<dbReference type="PDB" id="8Q1U">
    <property type="method" value="EM"/>
    <property type="resolution" value="3.30 A"/>
    <property type="chains" value="c=1-76"/>
</dbReference>
<dbReference type="PDB" id="8Q1Y">
    <property type="method" value="EM"/>
    <property type="resolution" value="2.60 A"/>
    <property type="chains" value="c=1-76"/>
</dbReference>
<dbReference type="PDB" id="8Q25">
    <property type="method" value="EM"/>
    <property type="resolution" value="2.80 A"/>
    <property type="chains" value="c=1-76"/>
</dbReference>
<dbReference type="PDB" id="8Q45">
    <property type="method" value="EM"/>
    <property type="resolution" value="2.70 A"/>
    <property type="chains" value="c=1-76"/>
</dbReference>
<dbReference type="PDB" id="8Q46">
    <property type="method" value="EM"/>
    <property type="resolution" value="2.60 A"/>
    <property type="chains" value="c=1-76"/>
</dbReference>
<dbReference type="PDB" id="8Q47">
    <property type="method" value="EM"/>
    <property type="resolution" value="2.90 A"/>
    <property type="chains" value="c=1-76"/>
</dbReference>
<dbReference type="PDB" id="8Q48">
    <property type="method" value="EM"/>
    <property type="resolution" value="2.50 A"/>
    <property type="chains" value="c=1-76"/>
</dbReference>
<dbReference type="PDB" id="8Q49">
    <property type="method" value="EM"/>
    <property type="resolution" value="2.60 A"/>
    <property type="chains" value="c=1-76"/>
</dbReference>
<dbReference type="PDB" id="8Q4A">
    <property type="method" value="EM"/>
    <property type="resolution" value="2.60 A"/>
    <property type="chains" value="c=1-76"/>
</dbReference>
<dbReference type="PDBsum" id="5LC5"/>
<dbReference type="PDBsum" id="5LDW"/>
<dbReference type="PDBsum" id="5LDX"/>
<dbReference type="PDBsum" id="5LNK"/>
<dbReference type="PDBsum" id="5O31"/>
<dbReference type="PDBsum" id="7DGQ"/>
<dbReference type="PDBsum" id="7DGR"/>
<dbReference type="PDBsum" id="7DGS"/>
<dbReference type="PDBsum" id="7DGZ"/>
<dbReference type="PDBsum" id="7DH0"/>
<dbReference type="PDBsum" id="7DKF"/>
<dbReference type="PDBsum" id="7QSD"/>
<dbReference type="PDBsum" id="7QSK"/>
<dbReference type="PDBsum" id="7QSL"/>
<dbReference type="PDBsum" id="7QSM"/>
<dbReference type="PDBsum" id="7QSN"/>
<dbReference type="PDBsum" id="7QSO"/>
<dbReference type="PDBsum" id="7R41"/>
<dbReference type="PDBsum" id="7R42"/>
<dbReference type="PDBsum" id="7R43"/>
<dbReference type="PDBsum" id="7R44"/>
<dbReference type="PDBsum" id="7R45"/>
<dbReference type="PDBsum" id="7R46"/>
<dbReference type="PDBsum" id="7R47"/>
<dbReference type="PDBsum" id="7R48"/>
<dbReference type="PDBsum" id="7R4C"/>
<dbReference type="PDBsum" id="7R4D"/>
<dbReference type="PDBsum" id="7R4F"/>
<dbReference type="PDBsum" id="7R4G"/>
<dbReference type="PDBsum" id="8Q0A"/>
<dbReference type="PDBsum" id="8Q0F"/>
<dbReference type="PDBsum" id="8Q0J"/>
<dbReference type="PDBsum" id="8Q0M"/>
<dbReference type="PDBsum" id="8Q0O"/>
<dbReference type="PDBsum" id="8Q0Q"/>
<dbReference type="PDBsum" id="8Q1P"/>
<dbReference type="PDBsum" id="8Q1U"/>
<dbReference type="PDBsum" id="8Q1Y"/>
<dbReference type="PDBsum" id="8Q25"/>
<dbReference type="PDBsum" id="8Q45"/>
<dbReference type="PDBsum" id="8Q46"/>
<dbReference type="PDBsum" id="8Q47"/>
<dbReference type="PDBsum" id="8Q48"/>
<dbReference type="PDBsum" id="8Q49"/>
<dbReference type="PDBsum" id="8Q4A"/>
<dbReference type="EMDB" id="EMD-14127"/>
<dbReference type="EMDB" id="EMD-14132"/>
<dbReference type="EMDB" id="EMD-14133"/>
<dbReference type="EMDB" id="EMD-14134"/>
<dbReference type="EMDB" id="EMD-14139"/>
<dbReference type="EMDB" id="EMD-14140"/>
<dbReference type="EMDB" id="EMD-14251"/>
<dbReference type="EMDB" id="EMD-14256"/>
<dbReference type="EMDB" id="EMD-14261"/>
<dbReference type="EMDB" id="EMD-14266"/>
<dbReference type="EMDB" id="EMD-14272"/>
<dbReference type="EMDB" id="EMD-14277"/>
<dbReference type="EMDB" id="EMD-14282"/>
<dbReference type="EMDB" id="EMD-14287"/>
<dbReference type="EMDB" id="EMD-14292"/>
<dbReference type="EMDB" id="EMD-14297"/>
<dbReference type="EMDB" id="EMD-14302"/>
<dbReference type="EMDB" id="EMD-14307"/>
<dbReference type="EMDB" id="EMD-18051"/>
<dbReference type="EMDB" id="EMD-18052"/>
<dbReference type="EMDB" id="EMD-18054"/>
<dbReference type="EMDB" id="EMD-18055"/>
<dbReference type="EMDB" id="EMD-18057"/>
<dbReference type="EMDB" id="EMD-18059"/>
<dbReference type="EMDB" id="EMD-18066"/>
<dbReference type="EMDB" id="EMD-18067"/>
<dbReference type="EMDB" id="EMD-18068"/>
<dbReference type="EMDB" id="EMD-18069"/>
<dbReference type="EMDB" id="EMD-18138"/>
<dbReference type="EMDB" id="EMD-18139"/>
<dbReference type="EMDB" id="EMD-18140"/>
<dbReference type="EMDB" id="EMD-18141"/>
<dbReference type="EMDB" id="EMD-18142"/>
<dbReference type="EMDB" id="EMD-18143"/>
<dbReference type="EMDB" id="EMD-30673"/>
<dbReference type="EMDB" id="EMD-30674"/>
<dbReference type="EMDB" id="EMD-30675"/>
<dbReference type="EMDB" id="EMD-30676"/>
<dbReference type="EMDB" id="EMD-30677"/>
<dbReference type="EMDB" id="EMD-30706"/>
<dbReference type="EMDB" id="EMD-3731"/>
<dbReference type="EMDB" id="EMD-4032"/>
<dbReference type="EMDB" id="EMD-4040"/>
<dbReference type="EMDB" id="EMD-4041"/>
<dbReference type="EMDB" id="EMD-4093"/>
<dbReference type="SMR" id="Q02376"/>
<dbReference type="CORUM" id="Q02376"/>
<dbReference type="DIP" id="DIP-38817N"/>
<dbReference type="FunCoup" id="Q02376">
    <property type="interactions" value="334"/>
</dbReference>
<dbReference type="IntAct" id="Q02376">
    <property type="interactions" value="1"/>
</dbReference>
<dbReference type="STRING" id="9913.ENSBTAP00000056992"/>
<dbReference type="TCDB" id="3.D.1.6.1">
    <property type="family name" value="the h+ or na+-translocating nadh dehydrogenase (ndh) family"/>
</dbReference>
<dbReference type="PaxDb" id="9913-ENSBTAP00000051891"/>
<dbReference type="GeneID" id="282289"/>
<dbReference type="KEGG" id="bta:282289"/>
<dbReference type="CTD" id="4717"/>
<dbReference type="VEuPathDB" id="HostDB:ENSBTAG00000039582"/>
<dbReference type="eggNOG" id="ENOG502SFTF">
    <property type="taxonomic scope" value="Eukaryota"/>
</dbReference>
<dbReference type="HOGENOM" id="CLU_199185_0_0_1"/>
<dbReference type="InParanoid" id="Q02376"/>
<dbReference type="OMA" id="SAFIWGL"/>
<dbReference type="OrthoDB" id="9900059at2759"/>
<dbReference type="TreeFam" id="TF338333"/>
<dbReference type="Reactome" id="R-BTA-611105">
    <property type="pathway name" value="Respiratory electron transport"/>
</dbReference>
<dbReference type="Reactome" id="R-BTA-6799198">
    <property type="pathway name" value="Complex I biogenesis"/>
</dbReference>
<dbReference type="Proteomes" id="UP000009136">
    <property type="component" value="Chromosome 17"/>
</dbReference>
<dbReference type="Bgee" id="ENSBTAG00000039582">
    <property type="expression patterns" value="Expressed in oocyte and 105 other cell types or tissues"/>
</dbReference>
<dbReference type="GO" id="GO:0005743">
    <property type="term" value="C:mitochondrial inner membrane"/>
    <property type="evidence" value="ECO:0007669"/>
    <property type="project" value="UniProtKB-SubCell"/>
</dbReference>
<dbReference type="GO" id="GO:0005739">
    <property type="term" value="C:mitochondrion"/>
    <property type="evidence" value="ECO:0000305"/>
    <property type="project" value="UniProtKB"/>
</dbReference>
<dbReference type="GO" id="GO:0045271">
    <property type="term" value="C:respiratory chain complex I"/>
    <property type="evidence" value="ECO:0000314"/>
    <property type="project" value="UniProtKB"/>
</dbReference>
<dbReference type="InterPro" id="IPR026192">
    <property type="entry name" value="NDUFC1"/>
</dbReference>
<dbReference type="PANTHER" id="PTHR17097:SF0">
    <property type="entry name" value="NADH DEHYDROGENASE [UBIQUINONE] 1 SUBUNIT C1, MITOCHONDRIAL"/>
    <property type="match status" value="1"/>
</dbReference>
<dbReference type="PANTHER" id="PTHR17097">
    <property type="entry name" value="NADH-UBIQUINONE OXIDOREDUCTASE KFYI SUBUNIT"/>
    <property type="match status" value="1"/>
</dbReference>
<dbReference type="Pfam" id="PF15088">
    <property type="entry name" value="NADH_dh_m_C1"/>
    <property type="match status" value="1"/>
</dbReference>
<sequence length="76" mass="8784">MAPSALLRPFWKLLAPARFPSVSSSRSKFYIQEPPHGSPNWLKVGLTLGTSVFLWIYLIKQHNEDVLEYKRRNGLE</sequence>
<organism>
    <name type="scientific">Bos taurus</name>
    <name type="common">Bovine</name>
    <dbReference type="NCBI Taxonomy" id="9913"/>
    <lineage>
        <taxon>Eukaryota</taxon>
        <taxon>Metazoa</taxon>
        <taxon>Chordata</taxon>
        <taxon>Craniata</taxon>
        <taxon>Vertebrata</taxon>
        <taxon>Euteleostomi</taxon>
        <taxon>Mammalia</taxon>
        <taxon>Eutheria</taxon>
        <taxon>Laurasiatheria</taxon>
        <taxon>Artiodactyla</taxon>
        <taxon>Ruminantia</taxon>
        <taxon>Pecora</taxon>
        <taxon>Bovidae</taxon>
        <taxon>Bovinae</taxon>
        <taxon>Bos</taxon>
    </lineage>
</organism>
<protein>
    <recommendedName>
        <fullName>NADH dehydrogenase [ubiquinone] 1 subunit C1, mitochondrial</fullName>
    </recommendedName>
    <alternativeName>
        <fullName>Complex I-KFYI</fullName>
        <shortName>CI-KFYI</shortName>
    </alternativeName>
    <alternativeName>
        <fullName>NADH-ubiquinone oxidoreductase KFYI subunit</fullName>
    </alternativeName>
</protein>
<name>NDUC1_BOVIN</name>
<comment type="function">
    <text evidence="1">Accessory subunit of the mitochondrial membrane respiratory chain NADH dehydrogenase (Complex I), that is believed not to be involved in catalysis. Complex I functions in the transfer of electrons from NADH to the respiratory chain. The immediate electron acceptor for the enzyme is believed to be ubiquinone.</text>
</comment>
<comment type="subunit">
    <text evidence="3 4 5">Complex I is composed of 45 different subunits.</text>
</comment>
<comment type="subcellular location">
    <subcellularLocation>
        <location evidence="7 8">Mitochondrion inner membrane</location>
        <topology>Single-pass membrane protein</topology>
        <orientation>Matrix side</orientation>
    </subcellularLocation>
</comment>
<comment type="similarity">
    <text evidence="6">Belongs to the complex I NDUFC1 subunit family.</text>
</comment>
<accession>Q02376</accession>
<accession>Q3T0H7</accession>
<gene>
    <name type="primary">NDUFC1</name>
</gene>
<feature type="transit peptide" description="Mitochondrion">
    <location>
        <begin position="1"/>
        <end position="27"/>
    </location>
</feature>
<feature type="chain" id="PRO_0000020048" description="NADH dehydrogenase [ubiquinone] 1 subunit C1, mitochondrial">
    <location>
        <begin position="28"/>
        <end position="76"/>
    </location>
</feature>
<feature type="transmembrane region" description="Helical" evidence="2">
    <location>
        <begin position="41"/>
        <end position="59"/>
    </location>
</feature>
<feature type="strand" evidence="10">
    <location>
        <begin position="30"/>
        <end position="32"/>
    </location>
</feature>
<feature type="strand" evidence="11">
    <location>
        <begin position="35"/>
        <end position="38"/>
    </location>
</feature>
<feature type="helix" evidence="9">
    <location>
        <begin position="41"/>
        <end position="72"/>
    </location>
</feature>
<keyword id="KW-0002">3D-structure</keyword>
<keyword id="KW-0903">Direct protein sequencing</keyword>
<keyword id="KW-0249">Electron transport</keyword>
<keyword id="KW-0472">Membrane</keyword>
<keyword id="KW-0496">Mitochondrion</keyword>
<keyword id="KW-0999">Mitochondrion inner membrane</keyword>
<keyword id="KW-1185">Reference proteome</keyword>
<keyword id="KW-0679">Respiratory chain</keyword>
<keyword id="KW-0809">Transit peptide</keyword>
<keyword id="KW-0812">Transmembrane</keyword>
<keyword id="KW-1133">Transmembrane helix</keyword>
<keyword id="KW-0813">Transport</keyword>
<reference key="1">
    <citation type="journal article" date="1992" name="J. Mol. Biol.">
        <title>Sequences of 20 subunits of NADH:ubiquinone oxidoreductase from bovine heart mitochondria. Application of a novel strategy for sequencing proteins using the polymerase chain reaction.</title>
        <authorList>
            <person name="Walker J.E."/>
            <person name="Arizmendi J.M."/>
            <person name="Dupuis A."/>
            <person name="Fearnley I.M."/>
            <person name="Finel M."/>
            <person name="Medd S.M."/>
            <person name="Pilkington S.J."/>
            <person name="Runswick M.J."/>
            <person name="Skehel J.M."/>
        </authorList>
    </citation>
    <scope>NUCLEOTIDE SEQUENCE [MRNA]</scope>
    <scope>PARTIAL PROTEIN SEQUENCE</scope>
    <source>
        <tissue>Heart</tissue>
    </source>
</reference>
<reference key="2">
    <citation type="submission" date="2005-08" db="EMBL/GenBank/DDBJ databases">
        <authorList>
            <consortium name="NIH - Mammalian Gene Collection (MGC) project"/>
        </authorList>
    </citation>
    <scope>NUCLEOTIDE SEQUENCE [LARGE SCALE MRNA]</scope>
    <source>
        <strain>Crossbred X Angus</strain>
        <tissue>Ileum</tissue>
    </source>
</reference>
<reference key="3">
    <citation type="journal article" date="2000" name="Biochemistry">
        <title>Resolution of the membrane domain of bovine complex I into subcomplexes: implications for the structural organization of the enzyme.</title>
        <authorList>
            <person name="Sazanov L.A."/>
            <person name="Peak-Chew S.Y."/>
            <person name="Fearnley I.M."/>
            <person name="Walker J.E."/>
        </authorList>
    </citation>
    <scope>PARTIAL PROTEIN SEQUENCE</scope>
    <scope>SUBUNIT</scope>
    <scope>IDENTIFICATION IN COMPLEX I</scope>
    <scope>SUBCELLULAR LOCATION</scope>
</reference>
<reference key="4">
    <citation type="journal article" date="2008" name="Anal. Biochem.">
        <title>Subunit analysis of bovine heart complex I by reversed-phase high-performance liquid chromatography, electrospray ionization-tandem mass spectrometry, and matrix-assisted laser desorption/ionization-time-of-flight mass spectrometry.</title>
        <authorList>
            <person name="Lemma-Gray P."/>
            <person name="Valusova E."/>
            <person name="Carroll C.A."/>
            <person name="Weintraub S.T."/>
            <person name="Musatov A."/>
            <person name="Robinson N.C."/>
        </authorList>
    </citation>
    <scope>SUBUNIT</scope>
    <scope>IDENTIFICATION IN COMPLEX I</scope>
    <scope>SUBCELLULAR LOCATION</scope>
</reference>
<proteinExistence type="evidence at protein level"/>